<proteinExistence type="evidence at protein level"/>
<comment type="function">
    <text evidence="2 7">Downstream effector molecule for Rab11 GTPase which is involved in endocytic trafficking, cytokinesis and intracellular ciliogenesis by participating in membrane delivery (PubMed:18685082). Recruited by Rab11 to endosomes where it links Rab11 to dynein motor complex. The functional Rab11-RAB11FIP3-dynein complex regulates the movement of peripheral sorting endosomes (SE) along microtubule tracks toward the microtubule organizing center/centrosome, generating the endocytic recycling compartment (ERC) during interphase of cell cycle. Facilitates the interaction between dynein and dynactin and activates dynein processivity (By similarity). Binding with ASAP1 is needed to regulate the pericentrosomal localization of recycling endosomes (PubMed:18685082). The Rab11-RAB11FIP3 complex is also implicated in the transport during telophase of vesicles derived from recycling endosomes to the cleavage furrow via centrosome-anchored microtubules, where the vesicles function to deliver membrane during late cytokinesis and abscission. The recruitment of Rab11-RAB11FIP3-containing endosomes to the cleavage furrow and tethering to the midbody is co-mediated by RAB11FIP3 interaction with ARF6-exocyst and RACGAP1-MKLP1 tethering complexes. Also involved in the Rab11-Rabin8-Rab8 ciliogenesis cascade by facilitating the orderly assembly of a ciliary targeting complex containing Rab11, ASAP1, Rabin8/RAB3IP, RAB11FIP3 and ARF4, which directs preciliary vesicle trafficking to mother centriole and ciliogenesis initiation. Also promotes the activity of Rab11 and ASAP1 in the ARF4-dependent Golgi-to-cilia transport of the sensory receptor rhodopsin. Competes with WDR44 for binding to Rab11, which controls intracellular ciliogenesis pathway. May play a role in breast cancer cell motility by regulating actin cytoskeleton (By similarity).</text>
</comment>
<comment type="subunit">
    <text evidence="2 7">Homodimer. Interacts with RAB11A; the interaction is direct and is required for the recruitment to endosomes. Interacts with RAB11B. Forms a ternary complex with RAB11A and dynein intermediate chain DYNC1LI1; RAB11FIP3 links RAB11A to dynein and the interaction regulates endocytic trafficking. Interacts with dynein intermediate chain and dynactin (DCTN1); the interaction activates dynein processivity. Interacts with ARF6 and EXOC7; the interaction serves for recruitment and tethering of recycling endosomes-derived vesicles to the cleavage furrow/midbody. Interacts with RACGAP1/MgcRacGAP; the interaction occurs at late telophase and is required for recruitment and tethering of recycling endosomes-derived vesicles to the cleavage furrow/midbody. Forms a complex with RAB11A and Rabin8/RAB3IP, probably a heterohexamer with two of each protein subunit, where RAB3IP and RAB11FIP3 simultaneously bind to RAB11A; the complex promotes preciliary trafficking (By similarity). Forms a complex containing RAB11A, ASAP1, RAB3IP, RAP11FIP3 and ARF4; the complex promotes preciliary trafficking; the complex binds to RHO in photoreceptor cells and promotes RHO ciliary transport (PubMed:18685082). Interacts with RAB11FIP4. Interacts with RAB25 (By similarity).</text>
</comment>
<comment type="subcellular location">
    <subcellularLocation>
        <location evidence="2">Recycling endosome membrane</location>
        <topology evidence="11">Peripheral membrane protein</topology>
    </subcellularLocation>
    <subcellularLocation>
        <location evidence="2">Cytoplasm</location>
        <location evidence="2">Cytoskeleton</location>
        <location evidence="2">Microtubule organizing center</location>
        <location evidence="2">Centrosome</location>
    </subcellularLocation>
    <subcellularLocation>
        <location evidence="2">Cleavage furrow</location>
    </subcellularLocation>
    <subcellularLocation>
        <location evidence="2">Midbody</location>
    </subcellularLocation>
    <subcellularLocation>
        <location evidence="2">Golgi apparatus membrane</location>
        <topology evidence="11">Peripheral membrane protein</topology>
    </subcellularLocation>
    <subcellularLocation>
        <location evidence="2">Golgi apparatus</location>
        <location evidence="2">trans-Golgi network membrane</location>
        <topology evidence="11">Peripheral membrane protein</topology>
    </subcellularLocation>
</comment>
<comment type="alternative products">
    <event type="alternative splicing"/>
    <isoform>
        <id>Q8CHD8-1</id>
        <name>1</name>
        <sequence type="displayed"/>
    </isoform>
    <isoform>
        <id>Q8CHD8-2</id>
        <name>2</name>
        <sequence type="described" ref="VSP_038667"/>
    </isoform>
    <isoform>
        <id>Q8CHD8-3</id>
        <name>3</name>
        <sequence type="described" ref="VSP_038668"/>
    </isoform>
</comment>
<comment type="domain">
    <text evidence="2">The RBD-FIP domain mediates the interaction with Rab11 (RAB11A or RAB11B).</text>
</comment>
<protein>
    <recommendedName>
        <fullName evidence="2">Rab11 family-interacting protein 3</fullName>
        <shortName evidence="10">FIP3</shortName>
        <shortName evidence="2">FIP3-Rab11</shortName>
        <shortName evidence="2">Rab11-FIP3</shortName>
    </recommendedName>
</protein>
<sequence>MELCQPTSLSDHDQPASGPQRGVMGLVGPDAPRGWSEEPEEHAQLQRWPEGPNAPICWPEEVEEPHAPSRWAKEPNAPRCSSQEPDESCHLAEELEESDSPRCWPQEPDTPCHLAKELEEPDAPRCLPQEPDTPCYLAKELEEPNIPRCWPQEPDVPCHLAKELEEPDAPRCWPQEPDAFCHLLKEVEEPDALRCWLQGPDAPCHLAKELEDLDSPRCWPQEPDESCHLAKELEEPDAPCHLAKELEEPDAPRCWPQEPDVPCLLAKKWEESDAPCLLTEELEEPDALHCWPQESEAPCLLAKELEEPDASHSCPQEADTGCLSAKEPEEPDVSHLWQGVPDAPCLLVKEPEEADALHCCWPEESEEPDALNPPCFWANEPDEPDPSRCWSEEPQVLCLWPEEQNTKRCWQEEPDAPCFWPEDREEPIVSCLQFKEPEKPKVRSSWPEELEDCCPTRGLPLEPLLADGELLQACPGPPSDPGPALSLPSEPGTAQEEGARLRAVFDALDRDGDGFVRIEDFIQFATVYGAEQVKDLTQYLDPSGLGVISFEDFYQGIVAIRNGDPDGQLYSVEPVQDEETPACADEFDDFVTYEANEVTDSAYMGSESTYSECETFTDEDTSTLVHPELQPEGDVDSAGGSGVPSECLDTMEEPDHGALLLLPGRSRPHSQAVVMVIGSEEHFEDYGEGNEAELSPETLCDGDGEDPAFLTPSPAKRLSSRKVARYLHQSGTLTMEALEDPPPEPVECPEEDIADKVIFLERRVSELEKDSAAAGEQHGRLRQENLQLVHRANALEEQLKEQEFRAQEKVLEETRKQKELLCKMEREKSIEIENLQARLQQLDEENSELRSCTPCLKANIERLEEEKQKMLDEIEELTQRLSEEQENKRKMGDRLSHERHQFQRDKEATQELIEDLRKQLEHLQLLRLEVEQRRGRSSSLGLQEYNSRARESELEQEVRRLKQDNRNLKEQNDELNGQIITLSIQGAKSLFSTSFSESLAAEISSVSRDELMEAIQKQEEINFRLQDYIDRIIVAILETNPSILEVK</sequence>
<organism>
    <name type="scientific">Mus musculus</name>
    <name type="common">Mouse</name>
    <dbReference type="NCBI Taxonomy" id="10090"/>
    <lineage>
        <taxon>Eukaryota</taxon>
        <taxon>Metazoa</taxon>
        <taxon>Chordata</taxon>
        <taxon>Craniata</taxon>
        <taxon>Vertebrata</taxon>
        <taxon>Euteleostomi</taxon>
        <taxon>Mammalia</taxon>
        <taxon>Eutheria</taxon>
        <taxon>Euarchontoglires</taxon>
        <taxon>Glires</taxon>
        <taxon>Rodentia</taxon>
        <taxon>Myomorpha</taxon>
        <taxon>Muroidea</taxon>
        <taxon>Muridae</taxon>
        <taxon>Murinae</taxon>
        <taxon>Mus</taxon>
        <taxon>Mus</taxon>
    </lineage>
</organism>
<name>RFIP3_MOUSE</name>
<reference key="1">
    <citation type="journal article" date="2009" name="PLoS Biol.">
        <title>Lineage-specific biology revealed by a finished genome assembly of the mouse.</title>
        <authorList>
            <person name="Church D.M."/>
            <person name="Goodstadt L."/>
            <person name="Hillier L.W."/>
            <person name="Zody M.C."/>
            <person name="Goldstein S."/>
            <person name="She X."/>
            <person name="Bult C.J."/>
            <person name="Agarwala R."/>
            <person name="Cherry J.L."/>
            <person name="DiCuccio M."/>
            <person name="Hlavina W."/>
            <person name="Kapustin Y."/>
            <person name="Meric P."/>
            <person name="Maglott D."/>
            <person name="Birtle Z."/>
            <person name="Marques A.C."/>
            <person name="Graves T."/>
            <person name="Zhou S."/>
            <person name="Teague B."/>
            <person name="Potamousis K."/>
            <person name="Churas C."/>
            <person name="Place M."/>
            <person name="Herschleb J."/>
            <person name="Runnheim R."/>
            <person name="Forrest D."/>
            <person name="Amos-Landgraf J."/>
            <person name="Schwartz D.C."/>
            <person name="Cheng Z."/>
            <person name="Lindblad-Toh K."/>
            <person name="Eichler E.E."/>
            <person name="Ponting C.P."/>
        </authorList>
    </citation>
    <scope>NUCLEOTIDE SEQUENCE [LARGE SCALE GENOMIC DNA]</scope>
    <source>
        <strain>C57BL/6J</strain>
    </source>
</reference>
<reference key="2">
    <citation type="journal article" date="2004" name="Genome Res.">
        <title>The status, quality, and expansion of the NIH full-length cDNA project: the Mammalian Gene Collection (MGC).</title>
        <authorList>
            <consortium name="The MGC Project Team"/>
        </authorList>
    </citation>
    <scope>NUCLEOTIDE SEQUENCE [LARGE SCALE MRNA] (ISOFORM 3)</scope>
    <source>
        <strain>FVB/N</strain>
        <tissue>Kidney</tissue>
    </source>
</reference>
<reference key="3">
    <citation type="journal article" date="2002" name="DNA Res.">
        <title>Prediction of the coding sequences of mouse homologues of KIAA gene: I. The complete nucleotide sequences of 100 mouse KIAA-homologous cDNAs identified by screening of terminal sequences of cDNA clones randomly sampled from size-fractionated libraries.</title>
        <authorList>
            <person name="Okazaki N."/>
            <person name="Kikuno R."/>
            <person name="Ohara R."/>
            <person name="Inamoto S."/>
            <person name="Hara Y."/>
            <person name="Nagase T."/>
            <person name="Ohara O."/>
            <person name="Koga H."/>
        </authorList>
    </citation>
    <scope>NUCLEOTIDE SEQUENCE [LARGE SCALE MRNA] OF 188-1047 (ISOFORM 2)</scope>
    <source>
        <tissue>Brain</tissue>
    </source>
</reference>
<reference key="4">
    <citation type="journal article" date="2008" name="Mol. Biol. Cell">
        <title>Arf GTPase-activating protein ASAP1 interacts with Rab11 effector FIP3 and regulates pericentrosomal localization of transferrin receptor-positive recycling endosome.</title>
        <authorList>
            <person name="Inoue H."/>
            <person name="Ha V.L."/>
            <person name="Prekeris R."/>
            <person name="Randazzo P.A."/>
        </authorList>
    </citation>
    <scope>FUNCTION</scope>
    <scope>INTERACTION WITH ASAP1</scope>
</reference>
<reference key="5">
    <citation type="journal article" date="2010" name="Cell">
        <title>A tissue-specific atlas of mouse protein phosphorylation and expression.</title>
        <authorList>
            <person name="Huttlin E.L."/>
            <person name="Jedrychowski M.P."/>
            <person name="Elias J.E."/>
            <person name="Goswami T."/>
            <person name="Rad R."/>
            <person name="Beausoleil S.A."/>
            <person name="Villen J."/>
            <person name="Haas W."/>
            <person name="Sowa M.E."/>
            <person name="Gygi S.P."/>
        </authorList>
    </citation>
    <scope>PHOSPHORYLATION [LARGE SCALE ANALYSIS] AT SER-765</scope>
    <scope>IDENTIFICATION BY MASS SPECTROMETRY [LARGE SCALE ANALYSIS]</scope>
    <source>
        <tissue>Kidney</tissue>
        <tissue>Testis</tissue>
    </source>
</reference>
<evidence type="ECO:0000250" key="1"/>
<evidence type="ECO:0000250" key="2">
    <source>
        <dbReference type="UniProtKB" id="O75154"/>
    </source>
</evidence>
<evidence type="ECO:0000255" key="3"/>
<evidence type="ECO:0000255" key="4">
    <source>
        <dbReference type="PROSITE-ProRule" id="PRU00448"/>
    </source>
</evidence>
<evidence type="ECO:0000255" key="5">
    <source>
        <dbReference type="PROSITE-ProRule" id="PRU00844"/>
    </source>
</evidence>
<evidence type="ECO:0000256" key="6">
    <source>
        <dbReference type="SAM" id="MobiDB-lite"/>
    </source>
</evidence>
<evidence type="ECO:0000269" key="7">
    <source>
    </source>
</evidence>
<evidence type="ECO:0000303" key="8">
    <source>
    </source>
</evidence>
<evidence type="ECO:0000303" key="9">
    <source>
    </source>
</evidence>
<evidence type="ECO:0000303" key="10">
    <source>
    </source>
</evidence>
<evidence type="ECO:0000305" key="11"/>
<evidence type="ECO:0000312" key="12">
    <source>
        <dbReference type="MGI" id="MGI:2444431"/>
    </source>
</evidence>
<evidence type="ECO:0007744" key="13">
    <source>
    </source>
</evidence>
<dbReference type="EMBL" id="AC140047">
    <property type="status" value="NOT_ANNOTATED_CDS"/>
    <property type="molecule type" value="Genomic_DNA"/>
</dbReference>
<dbReference type="EMBL" id="AC159277">
    <property type="status" value="NOT_ANNOTATED_CDS"/>
    <property type="molecule type" value="Genomic_DNA"/>
</dbReference>
<dbReference type="EMBL" id="BC023364">
    <property type="protein sequence ID" value="AAH23364.1"/>
    <property type="molecule type" value="mRNA"/>
</dbReference>
<dbReference type="EMBL" id="BC037132">
    <property type="protein sequence ID" value="AAH37132.1"/>
    <property type="molecule type" value="mRNA"/>
</dbReference>
<dbReference type="EMBL" id="AB093257">
    <property type="protein sequence ID" value="BAC41441.1"/>
    <property type="molecule type" value="mRNA"/>
</dbReference>
<dbReference type="CCDS" id="CCDS50039.1">
    <molecule id="Q8CHD8-2"/>
</dbReference>
<dbReference type="CCDS" id="CCDS50040.1">
    <molecule id="Q8CHD8-1"/>
</dbReference>
<dbReference type="CCDS" id="CCDS50041.1">
    <molecule id="Q8CHD8-3"/>
</dbReference>
<dbReference type="RefSeq" id="NP_001156340.1">
    <molecule id="Q8CHD8-1"/>
    <property type="nucleotide sequence ID" value="NM_001162868.2"/>
</dbReference>
<dbReference type="RefSeq" id="NP_001156341.1">
    <molecule id="Q8CHD8-3"/>
    <property type="nucleotide sequence ID" value="NM_001162869.2"/>
</dbReference>
<dbReference type="RefSeq" id="NP_694780.1">
    <molecule id="Q8CHD8-2"/>
    <property type="nucleotide sequence ID" value="NM_153140.2"/>
</dbReference>
<dbReference type="SMR" id="Q8CHD8"/>
<dbReference type="BioGRID" id="229626">
    <property type="interactions" value="2"/>
</dbReference>
<dbReference type="FunCoup" id="Q8CHD8">
    <property type="interactions" value="312"/>
</dbReference>
<dbReference type="IntAct" id="Q8CHD8">
    <property type="interactions" value="1"/>
</dbReference>
<dbReference type="MINT" id="Q8CHD8"/>
<dbReference type="STRING" id="10090.ENSMUSP00000113521"/>
<dbReference type="iPTMnet" id="Q8CHD8"/>
<dbReference type="PhosphoSitePlus" id="Q8CHD8"/>
<dbReference type="SwissPalm" id="Q8CHD8"/>
<dbReference type="PaxDb" id="10090-ENSMUSP00000113521"/>
<dbReference type="ProteomicsDB" id="255296">
    <molecule id="Q8CHD8-1"/>
</dbReference>
<dbReference type="ProteomicsDB" id="255297">
    <molecule id="Q8CHD8-2"/>
</dbReference>
<dbReference type="ProteomicsDB" id="255298">
    <molecule id="Q8CHD8-3"/>
</dbReference>
<dbReference type="Antibodypedia" id="22705">
    <property type="antibodies" value="84 antibodies from 25 providers"/>
</dbReference>
<dbReference type="DNASU" id="215445"/>
<dbReference type="Ensembl" id="ENSMUST00000118828.8">
    <molecule id="Q8CHD8-2"/>
    <property type="protein sequence ID" value="ENSMUSP00000113048.2"/>
    <property type="gene ID" value="ENSMUSG00000037098.19"/>
</dbReference>
<dbReference type="Ensembl" id="ENSMUST00000120691.9">
    <molecule id="Q8CHD8-1"/>
    <property type="protein sequence ID" value="ENSMUSP00000112875.2"/>
    <property type="gene ID" value="ENSMUSG00000037098.19"/>
</dbReference>
<dbReference type="Ensembl" id="ENSMUST00000122103.9">
    <molecule id="Q8CHD8-3"/>
    <property type="protein sequence ID" value="ENSMUSP00000113521.2"/>
    <property type="gene ID" value="ENSMUSG00000037098.19"/>
</dbReference>
<dbReference type="Ensembl" id="ENSMUST00000148021.3">
    <molecule id="Q8CHD8-2"/>
    <property type="protein sequence ID" value="ENSMUSP00000119626.3"/>
    <property type="gene ID" value="ENSMUSG00000037098.19"/>
</dbReference>
<dbReference type="GeneID" id="215445"/>
<dbReference type="KEGG" id="mmu:215445"/>
<dbReference type="UCSC" id="uc008bdc.2">
    <molecule id="Q8CHD8-2"/>
    <property type="organism name" value="mouse"/>
</dbReference>
<dbReference type="UCSC" id="uc008bdd.2">
    <molecule id="Q8CHD8-3"/>
    <property type="organism name" value="mouse"/>
</dbReference>
<dbReference type="UCSC" id="uc008bde.2">
    <molecule id="Q8CHD8-1"/>
    <property type="organism name" value="mouse"/>
</dbReference>
<dbReference type="AGR" id="MGI:2444431"/>
<dbReference type="CTD" id="9727"/>
<dbReference type="MGI" id="MGI:2444431">
    <property type="gene designation" value="Rab11fip3"/>
</dbReference>
<dbReference type="VEuPathDB" id="HostDB:ENSMUSG00000037098"/>
<dbReference type="eggNOG" id="KOG0982">
    <property type="taxonomic scope" value="Eukaryota"/>
</dbReference>
<dbReference type="GeneTree" id="ENSGT00440000033742"/>
<dbReference type="HOGENOM" id="CLU_018925_2_0_1"/>
<dbReference type="InParanoid" id="Q8CHD8"/>
<dbReference type="PhylomeDB" id="Q8CHD8"/>
<dbReference type="TreeFam" id="TF327221"/>
<dbReference type="Reactome" id="R-MMU-5620916">
    <property type="pathway name" value="VxPx cargo-targeting to cilium"/>
</dbReference>
<dbReference type="BioGRID-ORCS" id="215445">
    <property type="hits" value="1 hit in 73 CRISPR screens"/>
</dbReference>
<dbReference type="ChiTaRS" id="Rab11fip3">
    <property type="organism name" value="mouse"/>
</dbReference>
<dbReference type="PRO" id="PR:Q8CHD8"/>
<dbReference type="Proteomes" id="UP000000589">
    <property type="component" value="Chromosome 17"/>
</dbReference>
<dbReference type="RNAct" id="Q8CHD8">
    <property type="molecule type" value="protein"/>
</dbReference>
<dbReference type="Bgee" id="ENSMUSG00000037098">
    <property type="expression patterns" value="Expressed in right kidney and 216 other cell types or tissues"/>
</dbReference>
<dbReference type="GO" id="GO:0034451">
    <property type="term" value="C:centriolar satellite"/>
    <property type="evidence" value="ECO:0007669"/>
    <property type="project" value="Ensembl"/>
</dbReference>
<dbReference type="GO" id="GO:0005813">
    <property type="term" value="C:centrosome"/>
    <property type="evidence" value="ECO:0000250"/>
    <property type="project" value="UniProtKB"/>
</dbReference>
<dbReference type="GO" id="GO:0036064">
    <property type="term" value="C:ciliary basal body"/>
    <property type="evidence" value="ECO:0007669"/>
    <property type="project" value="Ensembl"/>
</dbReference>
<dbReference type="GO" id="GO:0032154">
    <property type="term" value="C:cleavage furrow"/>
    <property type="evidence" value="ECO:0000250"/>
    <property type="project" value="UniProtKB"/>
</dbReference>
<dbReference type="GO" id="GO:0030666">
    <property type="term" value="C:endocytic vesicle membrane"/>
    <property type="evidence" value="ECO:0000250"/>
    <property type="project" value="UniProtKB"/>
</dbReference>
<dbReference type="GO" id="GO:0005768">
    <property type="term" value="C:endosome"/>
    <property type="evidence" value="ECO:0000250"/>
    <property type="project" value="UniProtKB"/>
</dbReference>
<dbReference type="GO" id="GO:0000139">
    <property type="term" value="C:Golgi membrane"/>
    <property type="evidence" value="ECO:0000250"/>
    <property type="project" value="UniProtKB"/>
</dbReference>
<dbReference type="GO" id="GO:0045171">
    <property type="term" value="C:intercellular bridge"/>
    <property type="evidence" value="ECO:0007669"/>
    <property type="project" value="Ensembl"/>
</dbReference>
<dbReference type="GO" id="GO:0016020">
    <property type="term" value="C:membrane"/>
    <property type="evidence" value="ECO:0000314"/>
    <property type="project" value="MGI"/>
</dbReference>
<dbReference type="GO" id="GO:0030496">
    <property type="term" value="C:midbody"/>
    <property type="evidence" value="ECO:0000250"/>
    <property type="project" value="UniProtKB"/>
</dbReference>
<dbReference type="GO" id="GO:0005739">
    <property type="term" value="C:mitochondrion"/>
    <property type="evidence" value="ECO:0007669"/>
    <property type="project" value="Ensembl"/>
</dbReference>
<dbReference type="GO" id="GO:0005654">
    <property type="term" value="C:nucleoplasm"/>
    <property type="evidence" value="ECO:0007669"/>
    <property type="project" value="Ensembl"/>
</dbReference>
<dbReference type="GO" id="GO:0098944">
    <property type="term" value="C:postsynaptic recycling endosome membrane"/>
    <property type="evidence" value="ECO:0000314"/>
    <property type="project" value="SynGO"/>
</dbReference>
<dbReference type="GO" id="GO:0055037">
    <property type="term" value="C:recycling endosome"/>
    <property type="evidence" value="ECO:0000250"/>
    <property type="project" value="UniProtKB"/>
</dbReference>
<dbReference type="GO" id="GO:0055038">
    <property type="term" value="C:recycling endosome membrane"/>
    <property type="evidence" value="ECO:0007669"/>
    <property type="project" value="UniProtKB-SubCell"/>
</dbReference>
<dbReference type="GO" id="GO:0032588">
    <property type="term" value="C:trans-Golgi network membrane"/>
    <property type="evidence" value="ECO:0000250"/>
    <property type="project" value="UniProtKB"/>
</dbReference>
<dbReference type="GO" id="GO:0005509">
    <property type="term" value="F:calcium ion binding"/>
    <property type="evidence" value="ECO:0007669"/>
    <property type="project" value="InterPro"/>
</dbReference>
<dbReference type="GO" id="GO:0051959">
    <property type="term" value="F:dynein light intermediate chain binding"/>
    <property type="evidence" value="ECO:0000250"/>
    <property type="project" value="UniProtKB"/>
</dbReference>
<dbReference type="GO" id="GO:0042802">
    <property type="term" value="F:identical protein binding"/>
    <property type="evidence" value="ECO:0000250"/>
    <property type="project" value="UniProtKB"/>
</dbReference>
<dbReference type="GO" id="GO:0060090">
    <property type="term" value="F:molecular adaptor activity"/>
    <property type="evidence" value="ECO:0000250"/>
    <property type="project" value="UniProtKB"/>
</dbReference>
<dbReference type="GO" id="GO:0042803">
    <property type="term" value="F:protein homodimerization activity"/>
    <property type="evidence" value="ECO:0000250"/>
    <property type="project" value="UniProtKB"/>
</dbReference>
<dbReference type="GO" id="GO:0044877">
    <property type="term" value="F:protein-containing complex binding"/>
    <property type="evidence" value="ECO:0007669"/>
    <property type="project" value="Ensembl"/>
</dbReference>
<dbReference type="GO" id="GO:0030674">
    <property type="term" value="F:protein-macromolecule adaptor activity"/>
    <property type="evidence" value="ECO:0007669"/>
    <property type="project" value="Ensembl"/>
</dbReference>
<dbReference type="GO" id="GO:0031267">
    <property type="term" value="F:small GTPase binding"/>
    <property type="evidence" value="ECO:0000250"/>
    <property type="project" value="UniProtKB"/>
</dbReference>
<dbReference type="GO" id="GO:0051301">
    <property type="term" value="P:cell division"/>
    <property type="evidence" value="ECO:0007669"/>
    <property type="project" value="UniProtKB-KW"/>
</dbReference>
<dbReference type="GO" id="GO:0061502">
    <property type="term" value="P:early endosome to recycling endosome transport"/>
    <property type="evidence" value="ECO:0007669"/>
    <property type="project" value="Ensembl"/>
</dbReference>
<dbReference type="GO" id="GO:0032456">
    <property type="term" value="P:endocytic recycling"/>
    <property type="evidence" value="ECO:0000250"/>
    <property type="project" value="UniProtKB"/>
</dbReference>
<dbReference type="GO" id="GO:0043001">
    <property type="term" value="P:Golgi to plasma membrane protein transport"/>
    <property type="evidence" value="ECO:0007669"/>
    <property type="project" value="Ensembl"/>
</dbReference>
<dbReference type="GO" id="GO:0070164">
    <property type="term" value="P:negative regulation of adiponectin secretion"/>
    <property type="evidence" value="ECO:0007669"/>
    <property type="project" value="Ensembl"/>
</dbReference>
<dbReference type="GO" id="GO:0045724">
    <property type="term" value="P:positive regulation of cilium assembly"/>
    <property type="evidence" value="ECO:0007669"/>
    <property type="project" value="Ensembl"/>
</dbReference>
<dbReference type="GO" id="GO:1903438">
    <property type="term" value="P:positive regulation of mitotic cytokinetic process"/>
    <property type="evidence" value="ECO:0007669"/>
    <property type="project" value="Ensembl"/>
</dbReference>
<dbReference type="GO" id="GO:0061512">
    <property type="term" value="P:protein localization to cilium"/>
    <property type="evidence" value="ECO:0000315"/>
    <property type="project" value="MGI"/>
</dbReference>
<dbReference type="GO" id="GO:1905345">
    <property type="term" value="P:protein localization to cleavage furrow"/>
    <property type="evidence" value="ECO:0007669"/>
    <property type="project" value="Ensembl"/>
</dbReference>
<dbReference type="GO" id="GO:1902017">
    <property type="term" value="P:regulation of cilium assembly"/>
    <property type="evidence" value="ECO:0000250"/>
    <property type="project" value="UniProtKB"/>
</dbReference>
<dbReference type="GO" id="GO:0032465">
    <property type="term" value="P:regulation of cytokinesis"/>
    <property type="evidence" value="ECO:0000250"/>
    <property type="project" value="UniProtKB"/>
</dbReference>
<dbReference type="GO" id="GO:1902954">
    <property type="term" value="P:regulation of early endosome to recycling endosome transport"/>
    <property type="evidence" value="ECO:0000250"/>
    <property type="project" value="UniProtKB"/>
</dbReference>
<dbReference type="GO" id="GO:2001135">
    <property type="term" value="P:regulation of endocytic recycling"/>
    <property type="evidence" value="ECO:0000250"/>
    <property type="project" value="UniProtKB"/>
</dbReference>
<dbReference type="GO" id="GO:1904779">
    <property type="term" value="P:regulation of protein localization to centrosome"/>
    <property type="evidence" value="ECO:0000250"/>
    <property type="project" value="UniProtKB"/>
</dbReference>
<dbReference type="GO" id="GO:0060627">
    <property type="term" value="P:regulation of vesicle-mediated transport"/>
    <property type="evidence" value="ECO:0000250"/>
    <property type="project" value="UniProtKB"/>
</dbReference>
<dbReference type="CDD" id="cd00051">
    <property type="entry name" value="EFh"/>
    <property type="match status" value="1"/>
</dbReference>
<dbReference type="FunFam" id="1.20.5.2440:FF:000001">
    <property type="entry name" value="RAB11 family interacting protein 4"/>
    <property type="match status" value="1"/>
</dbReference>
<dbReference type="FunFam" id="1.10.238.10:FF:000227">
    <property type="entry name" value="Rab11 family-interacting protein 3"/>
    <property type="match status" value="1"/>
</dbReference>
<dbReference type="Gene3D" id="1.20.5.2440">
    <property type="match status" value="1"/>
</dbReference>
<dbReference type="Gene3D" id="1.10.238.10">
    <property type="entry name" value="EF-hand"/>
    <property type="match status" value="1"/>
</dbReference>
<dbReference type="InterPro" id="IPR011992">
    <property type="entry name" value="EF-hand-dom_pair"/>
</dbReference>
<dbReference type="InterPro" id="IPR002048">
    <property type="entry name" value="EF_hand_dom"/>
</dbReference>
<dbReference type="InterPro" id="IPR037245">
    <property type="entry name" value="FIP-RBD_C_sf"/>
</dbReference>
<dbReference type="InterPro" id="IPR019018">
    <property type="entry name" value="Rab-bd_FIP-RBD"/>
</dbReference>
<dbReference type="InterPro" id="IPR051977">
    <property type="entry name" value="Rab11-interacting_regulator"/>
</dbReference>
<dbReference type="PANTHER" id="PTHR15726:SF6">
    <property type="entry name" value="RAB11 FAMILY-INTERACTING PROTEIN 3"/>
    <property type="match status" value="1"/>
</dbReference>
<dbReference type="PANTHER" id="PTHR15726">
    <property type="entry name" value="RAB11-FAMILY INTERACTING PROTEIN"/>
    <property type="match status" value="1"/>
</dbReference>
<dbReference type="Pfam" id="PF13499">
    <property type="entry name" value="EF-hand_7"/>
    <property type="match status" value="1"/>
</dbReference>
<dbReference type="Pfam" id="PF25450">
    <property type="entry name" value="Rab11-FIP3"/>
    <property type="match status" value="1"/>
</dbReference>
<dbReference type="Pfam" id="PF09457">
    <property type="entry name" value="RBD-FIP"/>
    <property type="match status" value="1"/>
</dbReference>
<dbReference type="SUPFAM" id="SSF47473">
    <property type="entry name" value="EF-hand"/>
    <property type="match status" value="1"/>
</dbReference>
<dbReference type="SUPFAM" id="SSF144270">
    <property type="entry name" value="Eferin C-derminal domain-like"/>
    <property type="match status" value="1"/>
</dbReference>
<dbReference type="PROSITE" id="PS50222">
    <property type="entry name" value="EF_HAND_2"/>
    <property type="match status" value="2"/>
</dbReference>
<dbReference type="PROSITE" id="PS51511">
    <property type="entry name" value="FIP_RBD"/>
    <property type="match status" value="1"/>
</dbReference>
<keyword id="KW-0025">Alternative splicing</keyword>
<keyword id="KW-0106">Calcium</keyword>
<keyword id="KW-0131">Cell cycle</keyword>
<keyword id="KW-0132">Cell division</keyword>
<keyword id="KW-0175">Coiled coil</keyword>
<keyword id="KW-0963">Cytoplasm</keyword>
<keyword id="KW-0206">Cytoskeleton</keyword>
<keyword id="KW-0967">Endosome</keyword>
<keyword id="KW-0333">Golgi apparatus</keyword>
<keyword id="KW-0472">Membrane</keyword>
<keyword id="KW-0479">Metal-binding</keyword>
<keyword id="KW-0597">Phosphoprotein</keyword>
<keyword id="KW-1185">Reference proteome</keyword>
<keyword id="KW-0677">Repeat</keyword>
<keyword id="KW-0813">Transport</keyword>
<accession>Q8CHD8</accession>
<accession>Q8JZT3</accession>
<feature type="chain" id="PRO_0000390970" description="Rab11 family-interacting protein 3">
    <location>
        <begin position="1"/>
        <end position="1047"/>
    </location>
</feature>
<feature type="domain" description="EF-hand 1" evidence="4">
    <location>
        <begin position="496"/>
        <end position="531"/>
    </location>
</feature>
<feature type="domain" description="EF-hand 2" evidence="4">
    <location>
        <begin position="528"/>
        <end position="563"/>
    </location>
</feature>
<feature type="domain" description="FIP-RBD" evidence="5">
    <location>
        <begin position="985"/>
        <end position="1047"/>
    </location>
</feature>
<feature type="region of interest" description="Disordered" evidence="6">
    <location>
        <begin position="1"/>
        <end position="107"/>
    </location>
</feature>
<feature type="region of interest" description="Disordered" evidence="6">
    <location>
        <begin position="311"/>
        <end position="335"/>
    </location>
</feature>
<feature type="region of interest" description="Disordered" evidence="6">
    <location>
        <begin position="475"/>
        <end position="496"/>
    </location>
</feature>
<feature type="region of interest" description="ARF-binding domain (ABD)" evidence="1">
    <location>
        <begin position="775"/>
        <end position="879"/>
    </location>
</feature>
<feature type="region of interest" description="Disordered" evidence="6">
    <location>
        <begin position="882"/>
        <end position="906"/>
    </location>
</feature>
<feature type="coiled-coil region" evidence="3">
    <location>
        <begin position="750"/>
        <end position="985"/>
    </location>
</feature>
<feature type="compositionally biased region" description="Basic and acidic residues" evidence="6">
    <location>
        <begin position="64"/>
        <end position="73"/>
    </location>
</feature>
<feature type="binding site" evidence="11">
    <location>
        <position position="509"/>
    </location>
    <ligand>
        <name>Ca(2+)</name>
        <dbReference type="ChEBI" id="CHEBI:29108"/>
        <label>1</label>
    </ligand>
</feature>
<feature type="binding site" evidence="11">
    <location>
        <position position="511"/>
    </location>
    <ligand>
        <name>Ca(2+)</name>
        <dbReference type="ChEBI" id="CHEBI:29108"/>
        <label>1</label>
    </ligand>
</feature>
<feature type="binding site" evidence="11">
    <location>
        <position position="513"/>
    </location>
    <ligand>
        <name>Ca(2+)</name>
        <dbReference type="ChEBI" id="CHEBI:29108"/>
        <label>1</label>
    </ligand>
</feature>
<feature type="binding site" evidence="11">
    <location>
        <position position="520"/>
    </location>
    <ligand>
        <name>Ca(2+)</name>
        <dbReference type="ChEBI" id="CHEBI:29108"/>
        <label>1</label>
    </ligand>
</feature>
<feature type="binding site" evidence="11">
    <location>
        <position position="541"/>
    </location>
    <ligand>
        <name>Ca(2+)</name>
        <dbReference type="ChEBI" id="CHEBI:29108"/>
        <label>2</label>
    </ligand>
</feature>
<feature type="binding site" evidence="11">
    <location>
        <position position="543"/>
    </location>
    <ligand>
        <name>Ca(2+)</name>
        <dbReference type="ChEBI" id="CHEBI:29108"/>
        <label>2</label>
    </ligand>
</feature>
<feature type="binding site" evidence="11">
    <location>
        <position position="552"/>
    </location>
    <ligand>
        <name>Ca(2+)</name>
        <dbReference type="ChEBI" id="CHEBI:29108"/>
        <label>2</label>
    </ligand>
</feature>
<feature type="modified residue" description="Phosphoserine" evidence="2">
    <location>
        <position position="641"/>
    </location>
</feature>
<feature type="modified residue" description="Phosphoserine" evidence="13">
    <location>
        <position position="765"/>
    </location>
</feature>
<feature type="modified residue" description="Phosphoserine" evidence="2">
    <location>
        <position position="829"/>
    </location>
</feature>
<feature type="modified residue" description="Phosphoserine" evidence="2">
    <location>
        <position position="938"/>
    </location>
</feature>
<feature type="modified residue" description="Phosphoserine" evidence="2">
    <location>
        <position position="939"/>
    </location>
</feature>
<feature type="splice variant" id="VSP_038667" description="In isoform 2." evidence="8">
    <location>
        <begin position="1"/>
        <end position="603"/>
    </location>
</feature>
<feature type="splice variant" id="VSP_038668" description="In isoform 3." evidence="9">
    <original>P</original>
    <variation>PSSNPLASKLCDVLTDEAFEFYCSQCHKQINRLEDLSARLTDLEMN</variation>
    <location>
        <position position="712"/>
    </location>
</feature>
<gene>
    <name evidence="12" type="primary">Rab11fip3</name>
    <name type="synonym">Kiaa0665</name>
</gene>